<gene>
    <name evidence="1" type="primary">prfC</name>
    <name type="ordered locus">MAE_58730</name>
</gene>
<keyword id="KW-0963">Cytoplasm</keyword>
<keyword id="KW-0342">GTP-binding</keyword>
<keyword id="KW-0547">Nucleotide-binding</keyword>
<keyword id="KW-0648">Protein biosynthesis</keyword>
<evidence type="ECO:0000255" key="1">
    <source>
        <dbReference type="HAMAP-Rule" id="MF_00072"/>
    </source>
</evidence>
<reference key="1">
    <citation type="journal article" date="2007" name="DNA Res.">
        <title>Complete genomic structure of the bloom-forming toxic cyanobacterium Microcystis aeruginosa NIES-843.</title>
        <authorList>
            <person name="Kaneko T."/>
            <person name="Nakajima N."/>
            <person name="Okamoto S."/>
            <person name="Suzuki I."/>
            <person name="Tanabe Y."/>
            <person name="Tamaoki M."/>
            <person name="Nakamura Y."/>
            <person name="Kasai F."/>
            <person name="Watanabe A."/>
            <person name="Kawashima K."/>
            <person name="Kishida Y."/>
            <person name="Ono A."/>
            <person name="Shimizu Y."/>
            <person name="Takahashi C."/>
            <person name="Minami C."/>
            <person name="Fujishiro T."/>
            <person name="Kohara M."/>
            <person name="Katoh M."/>
            <person name="Nakazaki N."/>
            <person name="Nakayama S."/>
            <person name="Yamada M."/>
            <person name="Tabata S."/>
            <person name="Watanabe M.M."/>
        </authorList>
    </citation>
    <scope>NUCLEOTIDE SEQUENCE [LARGE SCALE GENOMIC DNA]</scope>
    <source>
        <strain>NIES-843 / IAM M-247</strain>
    </source>
</reference>
<dbReference type="EMBL" id="AP009552">
    <property type="protein sequence ID" value="BAG05695.1"/>
    <property type="molecule type" value="Genomic_DNA"/>
</dbReference>
<dbReference type="RefSeq" id="WP_012268066.1">
    <property type="nucleotide sequence ID" value="NC_010296.1"/>
</dbReference>
<dbReference type="SMR" id="B0JIY7"/>
<dbReference type="STRING" id="449447.MAE_58730"/>
<dbReference type="PaxDb" id="449447-MAE_58730"/>
<dbReference type="EnsemblBacteria" id="BAG05695">
    <property type="protein sequence ID" value="BAG05695"/>
    <property type="gene ID" value="MAE_58730"/>
</dbReference>
<dbReference type="KEGG" id="mar:MAE_58730"/>
<dbReference type="PATRIC" id="fig|449447.4.peg.5378"/>
<dbReference type="eggNOG" id="COG4108">
    <property type="taxonomic scope" value="Bacteria"/>
</dbReference>
<dbReference type="HOGENOM" id="CLU_002794_2_1_3"/>
<dbReference type="BioCyc" id="MAER449447:MAE_RS25635-MONOMER"/>
<dbReference type="Proteomes" id="UP000001510">
    <property type="component" value="Chromosome"/>
</dbReference>
<dbReference type="GO" id="GO:0005829">
    <property type="term" value="C:cytosol"/>
    <property type="evidence" value="ECO:0007669"/>
    <property type="project" value="TreeGrafter"/>
</dbReference>
<dbReference type="GO" id="GO:0005525">
    <property type="term" value="F:GTP binding"/>
    <property type="evidence" value="ECO:0007669"/>
    <property type="project" value="UniProtKB-UniRule"/>
</dbReference>
<dbReference type="GO" id="GO:0003924">
    <property type="term" value="F:GTPase activity"/>
    <property type="evidence" value="ECO:0007669"/>
    <property type="project" value="InterPro"/>
</dbReference>
<dbReference type="GO" id="GO:0016150">
    <property type="term" value="F:translation release factor activity, codon nonspecific"/>
    <property type="evidence" value="ECO:0007669"/>
    <property type="project" value="TreeGrafter"/>
</dbReference>
<dbReference type="GO" id="GO:0016149">
    <property type="term" value="F:translation release factor activity, codon specific"/>
    <property type="evidence" value="ECO:0007669"/>
    <property type="project" value="UniProtKB-UniRule"/>
</dbReference>
<dbReference type="GO" id="GO:0006449">
    <property type="term" value="P:regulation of translational termination"/>
    <property type="evidence" value="ECO:0007669"/>
    <property type="project" value="UniProtKB-UniRule"/>
</dbReference>
<dbReference type="CDD" id="cd04169">
    <property type="entry name" value="RF3"/>
    <property type="match status" value="1"/>
</dbReference>
<dbReference type="CDD" id="cd03689">
    <property type="entry name" value="RF3_II"/>
    <property type="match status" value="1"/>
</dbReference>
<dbReference type="FunFam" id="3.30.70.3280:FF:000001">
    <property type="entry name" value="Peptide chain release factor 3"/>
    <property type="match status" value="1"/>
</dbReference>
<dbReference type="FunFam" id="3.40.50.300:FF:000542">
    <property type="entry name" value="Peptide chain release factor 3"/>
    <property type="match status" value="1"/>
</dbReference>
<dbReference type="Gene3D" id="3.40.50.300">
    <property type="entry name" value="P-loop containing nucleotide triphosphate hydrolases"/>
    <property type="match status" value="1"/>
</dbReference>
<dbReference type="Gene3D" id="3.30.70.3280">
    <property type="entry name" value="Peptide chain release factor 3, domain III"/>
    <property type="match status" value="1"/>
</dbReference>
<dbReference type="Gene3D" id="2.40.30.10">
    <property type="entry name" value="Translation factors"/>
    <property type="match status" value="1"/>
</dbReference>
<dbReference type="HAMAP" id="MF_00072">
    <property type="entry name" value="Rel_fac_3"/>
    <property type="match status" value="1"/>
</dbReference>
<dbReference type="InterPro" id="IPR053905">
    <property type="entry name" value="EF-G-like_DII"/>
</dbReference>
<dbReference type="InterPro" id="IPR035647">
    <property type="entry name" value="EFG_III/V"/>
</dbReference>
<dbReference type="InterPro" id="IPR031157">
    <property type="entry name" value="G_TR_CS"/>
</dbReference>
<dbReference type="InterPro" id="IPR027417">
    <property type="entry name" value="P-loop_NTPase"/>
</dbReference>
<dbReference type="InterPro" id="IPR004548">
    <property type="entry name" value="PrfC"/>
</dbReference>
<dbReference type="InterPro" id="IPR032090">
    <property type="entry name" value="RF3_C"/>
</dbReference>
<dbReference type="InterPro" id="IPR038467">
    <property type="entry name" value="RF3_dom_3_sf"/>
</dbReference>
<dbReference type="InterPro" id="IPR041732">
    <property type="entry name" value="RF3_GTP-bd"/>
</dbReference>
<dbReference type="InterPro" id="IPR005225">
    <property type="entry name" value="Small_GTP-bd"/>
</dbReference>
<dbReference type="InterPro" id="IPR000795">
    <property type="entry name" value="T_Tr_GTP-bd_dom"/>
</dbReference>
<dbReference type="InterPro" id="IPR009000">
    <property type="entry name" value="Transl_B-barrel_sf"/>
</dbReference>
<dbReference type="NCBIfam" id="TIGR00503">
    <property type="entry name" value="prfC"/>
    <property type="match status" value="1"/>
</dbReference>
<dbReference type="NCBIfam" id="NF001964">
    <property type="entry name" value="PRK00741.1"/>
    <property type="match status" value="1"/>
</dbReference>
<dbReference type="NCBIfam" id="TIGR00231">
    <property type="entry name" value="small_GTP"/>
    <property type="match status" value="1"/>
</dbReference>
<dbReference type="PANTHER" id="PTHR43556">
    <property type="entry name" value="PEPTIDE CHAIN RELEASE FACTOR RF3"/>
    <property type="match status" value="1"/>
</dbReference>
<dbReference type="PANTHER" id="PTHR43556:SF2">
    <property type="entry name" value="PEPTIDE CHAIN RELEASE FACTOR RF3"/>
    <property type="match status" value="1"/>
</dbReference>
<dbReference type="Pfam" id="PF22042">
    <property type="entry name" value="EF-G_D2"/>
    <property type="match status" value="1"/>
</dbReference>
<dbReference type="Pfam" id="PF00009">
    <property type="entry name" value="GTP_EFTU"/>
    <property type="match status" value="1"/>
</dbReference>
<dbReference type="Pfam" id="PF16658">
    <property type="entry name" value="RF3_C"/>
    <property type="match status" value="1"/>
</dbReference>
<dbReference type="PRINTS" id="PR00315">
    <property type="entry name" value="ELONGATNFCT"/>
</dbReference>
<dbReference type="SUPFAM" id="SSF54980">
    <property type="entry name" value="EF-G C-terminal domain-like"/>
    <property type="match status" value="1"/>
</dbReference>
<dbReference type="SUPFAM" id="SSF52540">
    <property type="entry name" value="P-loop containing nucleoside triphosphate hydrolases"/>
    <property type="match status" value="1"/>
</dbReference>
<dbReference type="SUPFAM" id="SSF50447">
    <property type="entry name" value="Translation proteins"/>
    <property type="match status" value="1"/>
</dbReference>
<dbReference type="PROSITE" id="PS00301">
    <property type="entry name" value="G_TR_1"/>
    <property type="match status" value="1"/>
</dbReference>
<dbReference type="PROSITE" id="PS51722">
    <property type="entry name" value="G_TR_2"/>
    <property type="match status" value="1"/>
</dbReference>
<comment type="function">
    <text evidence="1">Increases the formation of ribosomal termination complexes and stimulates activities of RF-1 and RF-2. It binds guanine nucleotides and has strong preference for UGA stop codons. It may interact directly with the ribosome. The stimulation of RF-1 and RF-2 is significantly reduced by GTP and GDP, but not by GMP.</text>
</comment>
<comment type="subcellular location">
    <subcellularLocation>
        <location evidence="1">Cytoplasm</location>
    </subcellularLocation>
</comment>
<comment type="similarity">
    <text evidence="1">Belongs to the TRAFAC class translation factor GTPase superfamily. Classic translation factor GTPase family. PrfC subfamily.</text>
</comment>
<protein>
    <recommendedName>
        <fullName evidence="1">Peptide chain release factor 3</fullName>
        <shortName evidence="1">RF-3</shortName>
    </recommendedName>
</protein>
<accession>B0JIY7</accession>
<proteinExistence type="inferred from homology"/>
<name>RF3_MICAN</name>
<sequence length="544" mass="61499">MTTEIEKELETSEAVLEKRRNFAIISHPDAGKTTLTEKLLLYGGAIHQAGAVKARRDQRKATSDWMEMEKQRGISITSTVLQFDYRDFQINLLDTPGHQDFSEDTYRTLAAADNAVMLIDAAKGLEPQTRKLFEVCKLRQLPIFTFVNKMDRPGREPLDLLDEIERELGLQTYPVNWPIGIGDRFRGVFDRATQTIHLFERRSHGSQEAQETVIELGDPKIEDYLEKDLYYQLKEDIELLSELGAELDLPAVHAGEMTPIFFGSAMTNFGVKLFLESFLDYGLAPRGRNSSLGVLDPTYPDFTGFVFKLQANMDPKHRDRVAFVRVCTGKFEKDMVVNHARTGKTIRLSRPQKLFAQDRAVIEEAYPGDVIGLNNPGVFAIGDTIYMGKKLEYEGIPCFSPELFAYLRNPNPSKFKQFQKGVSELQEEGAVQILSSIDEFKRDPILAAVGQLQFEVVQFRLLSEYGVETTLEPLAYSLARWVAGGWAALEKAGKLFNTLTVKDYWGRPVLLFKNEWNLQQVKEDHPSLQLNSIAPVGSGVQPQS</sequence>
<organism>
    <name type="scientific">Microcystis aeruginosa (strain NIES-843 / IAM M-2473)</name>
    <dbReference type="NCBI Taxonomy" id="449447"/>
    <lineage>
        <taxon>Bacteria</taxon>
        <taxon>Bacillati</taxon>
        <taxon>Cyanobacteriota</taxon>
        <taxon>Cyanophyceae</taxon>
        <taxon>Oscillatoriophycideae</taxon>
        <taxon>Chroococcales</taxon>
        <taxon>Microcystaceae</taxon>
        <taxon>Microcystis</taxon>
    </lineage>
</organism>
<feature type="chain" id="PRO_1000075163" description="Peptide chain release factor 3">
    <location>
        <begin position="1"/>
        <end position="544"/>
    </location>
</feature>
<feature type="domain" description="tr-type G">
    <location>
        <begin position="17"/>
        <end position="286"/>
    </location>
</feature>
<feature type="binding site" evidence="1">
    <location>
        <begin position="26"/>
        <end position="33"/>
    </location>
    <ligand>
        <name>GTP</name>
        <dbReference type="ChEBI" id="CHEBI:37565"/>
    </ligand>
</feature>
<feature type="binding site" evidence="1">
    <location>
        <begin position="94"/>
        <end position="98"/>
    </location>
    <ligand>
        <name>GTP</name>
        <dbReference type="ChEBI" id="CHEBI:37565"/>
    </ligand>
</feature>
<feature type="binding site" evidence="1">
    <location>
        <begin position="148"/>
        <end position="151"/>
    </location>
    <ligand>
        <name>GTP</name>
        <dbReference type="ChEBI" id="CHEBI:37565"/>
    </ligand>
</feature>